<gene>
    <name type="primary">paa1</name>
    <name type="ORF">SPAP8A3.09c</name>
</gene>
<evidence type="ECO:0000250" key="1"/>
<evidence type="ECO:0000305" key="2"/>
<accession>Q9UT08</accession>
<accession>Q10293</accession>
<keyword id="KW-1185">Reference proteome</keyword>
<keyword id="KW-0677">Repeat</keyword>
<name>2AAA_SCHPO</name>
<reference key="1">
    <citation type="journal article" date="1996" name="Genes Cells">
        <title>The regulatory subunits of fission yeast protein phosphatase 2A (PP2A) affect cell morphogenesis, cell wall synthesis and cytokinesis.</title>
        <authorList>
            <person name="Kinoshita K."/>
            <person name="Nemoto T."/>
            <person name="Nabeshima K."/>
            <person name="Kondoh H."/>
            <person name="Niwa H."/>
            <person name="Yanagida M."/>
        </authorList>
    </citation>
    <scope>NUCLEOTIDE SEQUENCE [GENOMIC DNA]</scope>
</reference>
<reference key="2">
    <citation type="journal article" date="2002" name="Nature">
        <title>The genome sequence of Schizosaccharomyces pombe.</title>
        <authorList>
            <person name="Wood V."/>
            <person name="Gwilliam R."/>
            <person name="Rajandream M.A."/>
            <person name="Lyne M.H."/>
            <person name="Lyne R."/>
            <person name="Stewart A."/>
            <person name="Sgouros J.G."/>
            <person name="Peat N."/>
            <person name="Hayles J."/>
            <person name="Baker S.G."/>
            <person name="Basham D."/>
            <person name="Bowman S."/>
            <person name="Brooks K."/>
            <person name="Brown D."/>
            <person name="Brown S."/>
            <person name="Chillingworth T."/>
            <person name="Churcher C.M."/>
            <person name="Collins M."/>
            <person name="Connor R."/>
            <person name="Cronin A."/>
            <person name="Davis P."/>
            <person name="Feltwell T."/>
            <person name="Fraser A."/>
            <person name="Gentles S."/>
            <person name="Goble A."/>
            <person name="Hamlin N."/>
            <person name="Harris D.E."/>
            <person name="Hidalgo J."/>
            <person name="Hodgson G."/>
            <person name="Holroyd S."/>
            <person name="Hornsby T."/>
            <person name="Howarth S."/>
            <person name="Huckle E.J."/>
            <person name="Hunt S."/>
            <person name="Jagels K."/>
            <person name="James K.D."/>
            <person name="Jones L."/>
            <person name="Jones M."/>
            <person name="Leather S."/>
            <person name="McDonald S."/>
            <person name="McLean J."/>
            <person name="Mooney P."/>
            <person name="Moule S."/>
            <person name="Mungall K.L."/>
            <person name="Murphy L.D."/>
            <person name="Niblett D."/>
            <person name="Odell C."/>
            <person name="Oliver K."/>
            <person name="O'Neil S."/>
            <person name="Pearson D."/>
            <person name="Quail M.A."/>
            <person name="Rabbinowitsch E."/>
            <person name="Rutherford K.M."/>
            <person name="Rutter S."/>
            <person name="Saunders D."/>
            <person name="Seeger K."/>
            <person name="Sharp S."/>
            <person name="Skelton J."/>
            <person name="Simmonds M.N."/>
            <person name="Squares R."/>
            <person name="Squares S."/>
            <person name="Stevens K."/>
            <person name="Taylor K."/>
            <person name="Taylor R.G."/>
            <person name="Tivey A."/>
            <person name="Walsh S.V."/>
            <person name="Warren T."/>
            <person name="Whitehead S."/>
            <person name="Woodward J.R."/>
            <person name="Volckaert G."/>
            <person name="Aert R."/>
            <person name="Robben J."/>
            <person name="Grymonprez B."/>
            <person name="Weltjens I."/>
            <person name="Vanstreels E."/>
            <person name="Rieger M."/>
            <person name="Schaefer M."/>
            <person name="Mueller-Auer S."/>
            <person name="Gabel C."/>
            <person name="Fuchs M."/>
            <person name="Duesterhoeft A."/>
            <person name="Fritzc C."/>
            <person name="Holzer E."/>
            <person name="Moestl D."/>
            <person name="Hilbert H."/>
            <person name="Borzym K."/>
            <person name="Langer I."/>
            <person name="Beck A."/>
            <person name="Lehrach H."/>
            <person name="Reinhardt R."/>
            <person name="Pohl T.M."/>
            <person name="Eger P."/>
            <person name="Zimmermann W."/>
            <person name="Wedler H."/>
            <person name="Wambutt R."/>
            <person name="Purnelle B."/>
            <person name="Goffeau A."/>
            <person name="Cadieu E."/>
            <person name="Dreano S."/>
            <person name="Gloux S."/>
            <person name="Lelaure V."/>
            <person name="Mottier S."/>
            <person name="Galibert F."/>
            <person name="Aves S.J."/>
            <person name="Xiang Z."/>
            <person name="Hunt C."/>
            <person name="Moore K."/>
            <person name="Hurst S.M."/>
            <person name="Lucas M."/>
            <person name="Rochet M."/>
            <person name="Gaillardin C."/>
            <person name="Tallada V.A."/>
            <person name="Garzon A."/>
            <person name="Thode G."/>
            <person name="Daga R.R."/>
            <person name="Cruzado L."/>
            <person name="Jimenez J."/>
            <person name="Sanchez M."/>
            <person name="del Rey F."/>
            <person name="Benito J."/>
            <person name="Dominguez A."/>
            <person name="Revuelta J.L."/>
            <person name="Moreno S."/>
            <person name="Armstrong J."/>
            <person name="Forsburg S.L."/>
            <person name="Cerutti L."/>
            <person name="Lowe T."/>
            <person name="McCombie W.R."/>
            <person name="Paulsen I."/>
            <person name="Potashkin J."/>
            <person name="Shpakovski G.V."/>
            <person name="Ussery D."/>
            <person name="Barrell B.G."/>
            <person name="Nurse P."/>
        </authorList>
    </citation>
    <scope>NUCLEOTIDE SEQUENCE [LARGE SCALE GENOMIC DNA]</scope>
    <source>
        <strain>972 / ATCC 24843</strain>
    </source>
</reference>
<organism>
    <name type="scientific">Schizosaccharomyces pombe (strain 972 / ATCC 24843)</name>
    <name type="common">Fission yeast</name>
    <dbReference type="NCBI Taxonomy" id="284812"/>
    <lineage>
        <taxon>Eukaryota</taxon>
        <taxon>Fungi</taxon>
        <taxon>Dikarya</taxon>
        <taxon>Ascomycota</taxon>
        <taxon>Taphrinomycotina</taxon>
        <taxon>Schizosaccharomycetes</taxon>
        <taxon>Schizosaccharomycetales</taxon>
        <taxon>Schizosaccharomycetaceae</taxon>
        <taxon>Schizosaccharomyces</taxon>
    </lineage>
</organism>
<proteinExistence type="evidence at protein level"/>
<sequence>MQTENQVNDLYPIAVLIDELKHDEITYRLNALERLSTIALALGPERTRDELIPFLDESIDDEDEVLSALADQLGNFVDYVGGPEYAHVLLSPLENLAATEETVVRDKAVDSLNKVCICLSQEQLEQYFVPLVQRLSTAEWFTSRASSAGLYCAAYSQSENPAVKVSLRQSFSHLCHDEAPMVRRPAATNCAKFVFLVTKQEAIDEFIPLFNSLSNDDQDSVRLLSFDIMVSLAEVLKSDSEIRHYLLQPLRSFVSDSSWRTRYMVAANFVKLAKVVGPSLIKDELIKPFVLLMKDTEQEVRRAIATQIPGFCELLDKRIVLEEIIPVIQELINDPAQHVRAALGMNIGALAPQLGKEKTTEYLLPMFLELLKDENPEVRLNIISKLEVVNKVVGIELLSQSLLPAIVTLAEDKQWRVRLAIIDYIPLLAQQLGVEFFNEKMGNLCMSWLEDHVYSIREAAIKNLRKLTEIFGLEWATETIIPKFLAMRSHPNYLYRMTTIFAISEIAPALNAEVIEKQILPTLEQLVNDPIPNIRFNVAKAFEVLKPVLAAGGDSTVYEQQIIPLLEQLTKDNDPDVQYFATQALEQTND</sequence>
<protein>
    <recommendedName>
        <fullName>Protein phosphatase PP2A regulatory subunit A</fullName>
    </recommendedName>
    <alternativeName>
        <fullName>Protein phosphatase 2A 65 kDa regulatory subunit</fullName>
        <shortName>PR65</shortName>
    </alternativeName>
</protein>
<dbReference type="EMBL" id="D63916">
    <property type="protein sequence ID" value="BAA09946.1"/>
    <property type="molecule type" value="Genomic_DNA"/>
</dbReference>
<dbReference type="EMBL" id="CU329670">
    <property type="protein sequence ID" value="CAB55176.1"/>
    <property type="molecule type" value="Genomic_DNA"/>
</dbReference>
<dbReference type="PIR" id="T39246">
    <property type="entry name" value="T39246"/>
</dbReference>
<dbReference type="PIR" id="T44416">
    <property type="entry name" value="T44416"/>
</dbReference>
<dbReference type="RefSeq" id="NP_594948.1">
    <property type="nucleotide sequence ID" value="NM_001020379.2"/>
</dbReference>
<dbReference type="SMR" id="Q9UT08"/>
<dbReference type="BioGRID" id="279477">
    <property type="interactions" value="152"/>
</dbReference>
<dbReference type="DIP" id="DIP-61474N"/>
<dbReference type="FunCoup" id="Q9UT08">
    <property type="interactions" value="165"/>
</dbReference>
<dbReference type="IntAct" id="Q9UT08">
    <property type="interactions" value="3"/>
</dbReference>
<dbReference type="STRING" id="284812.Q9UT08"/>
<dbReference type="PaxDb" id="4896-SPAP8A3.09c.1"/>
<dbReference type="EnsemblFungi" id="SPAP8A3.09c.1">
    <property type="protein sequence ID" value="SPAP8A3.09c.1:pep"/>
    <property type="gene ID" value="SPAP8A3.09c"/>
</dbReference>
<dbReference type="GeneID" id="2543042"/>
<dbReference type="KEGG" id="spo:2543042"/>
<dbReference type="PomBase" id="SPAP8A3.09c">
    <property type="gene designation" value="paa1"/>
</dbReference>
<dbReference type="VEuPathDB" id="FungiDB:SPAP8A3.09c"/>
<dbReference type="eggNOG" id="KOG0211">
    <property type="taxonomic scope" value="Eukaryota"/>
</dbReference>
<dbReference type="HOGENOM" id="CLU_015533_2_1_1"/>
<dbReference type="InParanoid" id="Q9UT08"/>
<dbReference type="OMA" id="NRVEAMQ"/>
<dbReference type="PhylomeDB" id="Q9UT08"/>
<dbReference type="Reactome" id="R-SPO-198753">
    <property type="pathway name" value="ERK/MAPK targets"/>
</dbReference>
<dbReference type="Reactome" id="R-SPO-202670">
    <property type="pathway name" value="ERKs are inactivated"/>
</dbReference>
<dbReference type="Reactome" id="R-SPO-389513">
    <property type="pathway name" value="Co-inhibition by CTLA4"/>
</dbReference>
<dbReference type="Reactome" id="R-SPO-6811558">
    <property type="pathway name" value="PI5P, PP2A and IER3 Regulate PI3K/AKT Signaling"/>
</dbReference>
<dbReference type="Reactome" id="R-SPO-69273">
    <property type="pathway name" value="Cyclin A/B1/B2 associated events during G2/M transition"/>
</dbReference>
<dbReference type="Reactome" id="R-SPO-975957">
    <property type="pathway name" value="Nonsense Mediated Decay (NMD) enhanced by the Exon Junction Complex (EJC)"/>
</dbReference>
<dbReference type="PRO" id="PR:Q9UT08"/>
<dbReference type="Proteomes" id="UP000002485">
    <property type="component" value="Chromosome I"/>
</dbReference>
<dbReference type="GO" id="GO:0000775">
    <property type="term" value="C:chromosome, centromeric region"/>
    <property type="evidence" value="ECO:0000314"/>
    <property type="project" value="PomBase"/>
</dbReference>
<dbReference type="GO" id="GO:0005737">
    <property type="term" value="C:cytoplasm"/>
    <property type="evidence" value="ECO:0000318"/>
    <property type="project" value="GO_Central"/>
</dbReference>
<dbReference type="GO" id="GO:0005829">
    <property type="term" value="C:cytosol"/>
    <property type="evidence" value="ECO:0007005"/>
    <property type="project" value="PomBase"/>
</dbReference>
<dbReference type="GO" id="GO:0090443">
    <property type="term" value="C:FAR/SIN/STRIPAK complex"/>
    <property type="evidence" value="ECO:0000314"/>
    <property type="project" value="PomBase"/>
</dbReference>
<dbReference type="GO" id="GO:0110085">
    <property type="term" value="C:mitotic actomyosin contractile ring"/>
    <property type="evidence" value="ECO:0000314"/>
    <property type="project" value="PomBase"/>
</dbReference>
<dbReference type="GO" id="GO:0044732">
    <property type="term" value="C:mitotic spindle pole body"/>
    <property type="evidence" value="ECO:0000269"/>
    <property type="project" value="PomBase"/>
</dbReference>
<dbReference type="GO" id="GO:0005634">
    <property type="term" value="C:nucleus"/>
    <property type="evidence" value="ECO:0007005"/>
    <property type="project" value="PomBase"/>
</dbReference>
<dbReference type="GO" id="GO:0000159">
    <property type="term" value="C:protein phosphatase type 2A complex"/>
    <property type="evidence" value="ECO:0000314"/>
    <property type="project" value="PomBase"/>
</dbReference>
<dbReference type="GO" id="GO:0019888">
    <property type="term" value="F:protein phosphatase regulator activity"/>
    <property type="evidence" value="ECO:0000318"/>
    <property type="project" value="GO_Central"/>
</dbReference>
<dbReference type="GO" id="GO:0061509">
    <property type="term" value="P:asymmetric protein localization to old mitotic spindle pole body"/>
    <property type="evidence" value="ECO:0000315"/>
    <property type="project" value="PomBase"/>
</dbReference>
<dbReference type="GO" id="GO:0030952">
    <property type="term" value="P:establishment or maintenance of cytoskeleton polarity"/>
    <property type="evidence" value="ECO:0000315"/>
    <property type="project" value="PomBase"/>
</dbReference>
<dbReference type="GO" id="GO:1990813">
    <property type="term" value="P:meiotic centromeric cohesion protection in anaphase I"/>
    <property type="evidence" value="ECO:0000315"/>
    <property type="project" value="PomBase"/>
</dbReference>
<dbReference type="GO" id="GO:0051754">
    <property type="term" value="P:meiotic sister chromatid cohesion, centromeric"/>
    <property type="evidence" value="ECO:0000318"/>
    <property type="project" value="GO_Central"/>
</dbReference>
<dbReference type="GO" id="GO:0031030">
    <property type="term" value="P:negative regulation of septation initiation signaling"/>
    <property type="evidence" value="ECO:0000315"/>
    <property type="project" value="PomBase"/>
</dbReference>
<dbReference type="GO" id="GO:0051225">
    <property type="term" value="P:spindle assembly"/>
    <property type="evidence" value="ECO:0000318"/>
    <property type="project" value="GO_Central"/>
</dbReference>
<dbReference type="FunFam" id="1.25.10.10:FF:000011">
    <property type="entry name" value="Serine/threonine-protein phosphatase 2A regulatory subunit A alpha isoform"/>
    <property type="match status" value="1"/>
</dbReference>
<dbReference type="Gene3D" id="1.25.10.10">
    <property type="entry name" value="Leucine-rich Repeat Variant"/>
    <property type="match status" value="1"/>
</dbReference>
<dbReference type="InterPro" id="IPR011989">
    <property type="entry name" value="ARM-like"/>
</dbReference>
<dbReference type="InterPro" id="IPR016024">
    <property type="entry name" value="ARM-type_fold"/>
</dbReference>
<dbReference type="InterPro" id="IPR000357">
    <property type="entry name" value="HEAT"/>
</dbReference>
<dbReference type="InterPro" id="IPR021133">
    <property type="entry name" value="HEAT_type_2"/>
</dbReference>
<dbReference type="InterPro" id="IPR054573">
    <property type="entry name" value="PP2A/SF3B1-like_HEAT"/>
</dbReference>
<dbReference type="InterPro" id="IPR051023">
    <property type="entry name" value="PP2A_Regulatory_Subunit_A"/>
</dbReference>
<dbReference type="PANTHER" id="PTHR10648:SF4">
    <property type="entry name" value="PROTEIN PHOSPHATASE 2 (FORMERLY 2A), REGULATORY SUBUNIT A, BETA ISOFORM-RELATED"/>
    <property type="match status" value="1"/>
</dbReference>
<dbReference type="PANTHER" id="PTHR10648">
    <property type="entry name" value="SERINE/THREONINE-PROTEIN PHOSPHATASE PP2A 65 KDA REGULATORY SUBUNIT"/>
    <property type="match status" value="1"/>
</dbReference>
<dbReference type="Pfam" id="PF02985">
    <property type="entry name" value="HEAT"/>
    <property type="match status" value="1"/>
</dbReference>
<dbReference type="Pfam" id="PF13646">
    <property type="entry name" value="HEAT_2"/>
    <property type="match status" value="1"/>
</dbReference>
<dbReference type="Pfam" id="PF22646">
    <property type="entry name" value="PPP2R1A-like_HEAT"/>
    <property type="match status" value="1"/>
</dbReference>
<dbReference type="SUPFAM" id="SSF48371">
    <property type="entry name" value="ARM repeat"/>
    <property type="match status" value="1"/>
</dbReference>
<dbReference type="PROSITE" id="PS50077">
    <property type="entry name" value="HEAT_REPEAT"/>
    <property type="match status" value="11"/>
</dbReference>
<comment type="function">
    <text evidence="1">Phosphatase 2A affects a variety of biological processes in the cell such as transcription, cell cycle progression and cellular morphogenesis, and provides an initial identification of critical substrates for this phosphatase. The regulatory subunit may direct the catalytic subunit to distinct, albeit overlapping, subsets of substrates (By similarity).</text>
</comment>
<comment type="subunit">
    <text>PP2A exists in several trimeric forms, all of which consist of a core composed of a catalytic subunit associated with a 65 kDa (PR65) (Subunit A) and a 55 kDa (PR55) (Subunit B) regulatory subunit.</text>
</comment>
<comment type="interaction">
    <interactant intactId="EBI-16132377">
        <id>Q9UT08</id>
    </interactant>
    <interactant intactId="EBI-4320127">
        <id>P13681</id>
        <label>dis2</label>
    </interactant>
    <organismsDiffer>false</organismsDiffer>
    <experiments>10</experiments>
</comment>
<comment type="interaction">
    <interactant intactId="EBI-16132377">
        <id>Q9UT08</id>
    </interactant>
    <interactant intactId="EBI-16132256">
        <id>Q12702</id>
        <label>pab1</label>
    </interactant>
    <organismsDiffer>false</organismsDiffer>
    <experiments>6</experiments>
</comment>
<comment type="interaction">
    <interactant intactId="EBI-16132377">
        <id>Q9UT08</id>
    </interactant>
    <interactant intactId="EBI-989357">
        <id>Q10428</id>
        <label>par1</label>
    </interactant>
    <organismsDiffer>false</organismsDiffer>
    <experiments>6</experiments>
</comment>
<comment type="domain">
    <text>Each HEAT repeat appears to consist of two alpha helices joined by a hydrophilic region, the intrarepeat loop. The repeat units may be arranged laterally to form a rod-like structure.</text>
</comment>
<comment type="similarity">
    <text evidence="2">Belongs to the phosphatase 2A regulatory subunit A family.</text>
</comment>
<feature type="chain" id="PRO_0000071413" description="Protein phosphatase PP2A regulatory subunit A">
    <location>
        <begin position="1"/>
        <end position="590"/>
    </location>
</feature>
<feature type="repeat" description="HEAT 1" evidence="2">
    <location>
        <begin position="12"/>
        <end position="50"/>
    </location>
</feature>
<feature type="repeat" description="HEAT 2" evidence="2">
    <location>
        <begin position="89"/>
        <end position="127"/>
    </location>
</feature>
<feature type="repeat" description="HEAT 3" evidence="2">
    <location>
        <begin position="206"/>
        <end position="244"/>
    </location>
</feature>
<feature type="repeat" description="HEAT 4" evidence="2">
    <location>
        <begin position="246"/>
        <end position="284"/>
    </location>
</feature>
<feature type="repeat" description="HEAT 5" evidence="2">
    <location>
        <begin position="285"/>
        <end position="323"/>
    </location>
</feature>
<feature type="repeat" description="HEAT 6" evidence="2">
    <location>
        <begin position="324"/>
        <end position="362"/>
    </location>
</feature>
<feature type="repeat" description="HEAT 7" evidence="2">
    <location>
        <begin position="363"/>
        <end position="401"/>
    </location>
</feature>
<feature type="repeat" description="HEAT 8" evidence="2">
    <location>
        <begin position="402"/>
        <end position="440"/>
    </location>
</feature>
<feature type="repeat" description="HEAT 9" evidence="2">
    <location>
        <begin position="480"/>
        <end position="518"/>
    </location>
</feature>
<feature type="repeat" description="HEAT 10" evidence="2">
    <location>
        <begin position="519"/>
        <end position="551"/>
    </location>
</feature>
<feature type="repeat" description="HEAT 11" evidence="2">
    <location>
        <begin position="562"/>
        <end position="590"/>
    </location>
</feature>
<feature type="sequence conflict" description="In Ref. 1; BAA09946." evidence="2" ref="1">
    <original>QTEN</original>
    <variation>LDNS</variation>
    <location>
        <begin position="2"/>
        <end position="5"/>
    </location>
</feature>
<feature type="sequence conflict" description="In Ref. 1; BAA09946." evidence="2" ref="1">
    <original>L</original>
    <variation>R</variation>
    <location>
        <position position="89"/>
    </location>
</feature>